<protein>
    <recommendedName>
        <fullName evidence="1">Small ribosomal subunit protein uS3</fullName>
    </recommendedName>
    <alternativeName>
        <fullName evidence="2">30S ribosomal protein S3</fullName>
    </alternativeName>
</protein>
<evidence type="ECO:0000255" key="1">
    <source>
        <dbReference type="HAMAP-Rule" id="MF_01309"/>
    </source>
</evidence>
<evidence type="ECO:0000305" key="2"/>
<accession>A7ZSK3</accession>
<sequence length="233" mass="25983">MGQKVHPNGIRLGIVKPWNSTWFANTKEFADNLDSDFKVRQYLTKELAKASVSRIVIERPAKSIRVTIHTARPGIVIGKKGEDVEKLRKVVADIAGVPAQINIAEVRKPELDAKLVADSITSQLERRVMFRRAMKRAVQNAMRLGAKGIKVEVSGRLGGAEIARTEWYREGRVPLHTLRADIDYNTSEAHTTYGVIGVKVWIFKGEILGGMAAVEQPEKPAAQPKKQQRKGRK</sequence>
<proteinExistence type="inferred from homology"/>
<name>RS3_ECO24</name>
<comment type="function">
    <text evidence="1">Binds the lower part of the 30S subunit head. Binds mRNA in the 70S ribosome, positioning it for translation.</text>
</comment>
<comment type="subunit">
    <text evidence="1">Part of the 30S ribosomal subunit. Forms a tight complex with proteins S10 and S14.</text>
</comment>
<comment type="similarity">
    <text evidence="1">Belongs to the universal ribosomal protein uS3 family.</text>
</comment>
<reference key="1">
    <citation type="journal article" date="2008" name="J. Bacteriol.">
        <title>The pangenome structure of Escherichia coli: comparative genomic analysis of E. coli commensal and pathogenic isolates.</title>
        <authorList>
            <person name="Rasko D.A."/>
            <person name="Rosovitz M.J."/>
            <person name="Myers G.S.A."/>
            <person name="Mongodin E.F."/>
            <person name="Fricke W.F."/>
            <person name="Gajer P."/>
            <person name="Crabtree J."/>
            <person name="Sebaihia M."/>
            <person name="Thomson N.R."/>
            <person name="Chaudhuri R."/>
            <person name="Henderson I.R."/>
            <person name="Sperandio V."/>
            <person name="Ravel J."/>
        </authorList>
    </citation>
    <scope>NUCLEOTIDE SEQUENCE [LARGE SCALE GENOMIC DNA]</scope>
    <source>
        <strain>E24377A / ETEC</strain>
    </source>
</reference>
<organism>
    <name type="scientific">Escherichia coli O139:H28 (strain E24377A / ETEC)</name>
    <dbReference type="NCBI Taxonomy" id="331111"/>
    <lineage>
        <taxon>Bacteria</taxon>
        <taxon>Pseudomonadati</taxon>
        <taxon>Pseudomonadota</taxon>
        <taxon>Gammaproteobacteria</taxon>
        <taxon>Enterobacterales</taxon>
        <taxon>Enterobacteriaceae</taxon>
        <taxon>Escherichia</taxon>
    </lineage>
</organism>
<gene>
    <name evidence="1" type="primary">rpsC</name>
    <name type="ordered locus">EcE24377A_3797</name>
</gene>
<feature type="chain" id="PRO_1000086116" description="Small ribosomal subunit protein uS3">
    <location>
        <begin position="1"/>
        <end position="233"/>
    </location>
</feature>
<feature type="domain" description="KH type-2" evidence="1">
    <location>
        <begin position="39"/>
        <end position="107"/>
    </location>
</feature>
<dbReference type="EMBL" id="CP000800">
    <property type="protein sequence ID" value="ABV19661.1"/>
    <property type="molecule type" value="Genomic_DNA"/>
</dbReference>
<dbReference type="RefSeq" id="WP_000529945.1">
    <property type="nucleotide sequence ID" value="NC_009801.1"/>
</dbReference>
<dbReference type="SMR" id="A7ZSK3"/>
<dbReference type="GeneID" id="97603663"/>
<dbReference type="KEGG" id="ecw:EcE24377A_3797"/>
<dbReference type="HOGENOM" id="CLU_058591_0_2_6"/>
<dbReference type="Proteomes" id="UP000001122">
    <property type="component" value="Chromosome"/>
</dbReference>
<dbReference type="GO" id="GO:0022627">
    <property type="term" value="C:cytosolic small ribosomal subunit"/>
    <property type="evidence" value="ECO:0007669"/>
    <property type="project" value="TreeGrafter"/>
</dbReference>
<dbReference type="GO" id="GO:0003729">
    <property type="term" value="F:mRNA binding"/>
    <property type="evidence" value="ECO:0007669"/>
    <property type="project" value="UniProtKB-UniRule"/>
</dbReference>
<dbReference type="GO" id="GO:0019843">
    <property type="term" value="F:rRNA binding"/>
    <property type="evidence" value="ECO:0007669"/>
    <property type="project" value="UniProtKB-UniRule"/>
</dbReference>
<dbReference type="GO" id="GO:0003735">
    <property type="term" value="F:structural constituent of ribosome"/>
    <property type="evidence" value="ECO:0007669"/>
    <property type="project" value="InterPro"/>
</dbReference>
<dbReference type="GO" id="GO:0006412">
    <property type="term" value="P:translation"/>
    <property type="evidence" value="ECO:0007669"/>
    <property type="project" value="UniProtKB-UniRule"/>
</dbReference>
<dbReference type="CDD" id="cd02412">
    <property type="entry name" value="KH-II_30S_S3"/>
    <property type="match status" value="1"/>
</dbReference>
<dbReference type="FunFam" id="3.30.1140.32:FF:000001">
    <property type="entry name" value="30S ribosomal protein S3"/>
    <property type="match status" value="1"/>
</dbReference>
<dbReference type="FunFam" id="3.30.300.20:FF:000001">
    <property type="entry name" value="30S ribosomal protein S3"/>
    <property type="match status" value="1"/>
</dbReference>
<dbReference type="Gene3D" id="3.30.300.20">
    <property type="match status" value="1"/>
</dbReference>
<dbReference type="Gene3D" id="3.30.1140.32">
    <property type="entry name" value="Ribosomal protein S3, C-terminal domain"/>
    <property type="match status" value="1"/>
</dbReference>
<dbReference type="HAMAP" id="MF_01309_B">
    <property type="entry name" value="Ribosomal_uS3_B"/>
    <property type="match status" value="1"/>
</dbReference>
<dbReference type="InterPro" id="IPR004087">
    <property type="entry name" value="KH_dom"/>
</dbReference>
<dbReference type="InterPro" id="IPR015946">
    <property type="entry name" value="KH_dom-like_a/b"/>
</dbReference>
<dbReference type="InterPro" id="IPR004044">
    <property type="entry name" value="KH_dom_type_2"/>
</dbReference>
<dbReference type="InterPro" id="IPR009019">
    <property type="entry name" value="KH_sf_prok-type"/>
</dbReference>
<dbReference type="InterPro" id="IPR036419">
    <property type="entry name" value="Ribosomal_S3_C_sf"/>
</dbReference>
<dbReference type="InterPro" id="IPR005704">
    <property type="entry name" value="Ribosomal_uS3_bac-typ"/>
</dbReference>
<dbReference type="InterPro" id="IPR001351">
    <property type="entry name" value="Ribosomal_uS3_C"/>
</dbReference>
<dbReference type="InterPro" id="IPR018280">
    <property type="entry name" value="Ribosomal_uS3_CS"/>
</dbReference>
<dbReference type="NCBIfam" id="TIGR01009">
    <property type="entry name" value="rpsC_bact"/>
    <property type="match status" value="1"/>
</dbReference>
<dbReference type="PANTHER" id="PTHR11760">
    <property type="entry name" value="30S/40S RIBOSOMAL PROTEIN S3"/>
    <property type="match status" value="1"/>
</dbReference>
<dbReference type="PANTHER" id="PTHR11760:SF19">
    <property type="entry name" value="SMALL RIBOSOMAL SUBUNIT PROTEIN US3C"/>
    <property type="match status" value="1"/>
</dbReference>
<dbReference type="Pfam" id="PF07650">
    <property type="entry name" value="KH_2"/>
    <property type="match status" value="1"/>
</dbReference>
<dbReference type="Pfam" id="PF00189">
    <property type="entry name" value="Ribosomal_S3_C"/>
    <property type="match status" value="1"/>
</dbReference>
<dbReference type="SMART" id="SM00322">
    <property type="entry name" value="KH"/>
    <property type="match status" value="1"/>
</dbReference>
<dbReference type="SUPFAM" id="SSF54814">
    <property type="entry name" value="Prokaryotic type KH domain (KH-domain type II)"/>
    <property type="match status" value="1"/>
</dbReference>
<dbReference type="SUPFAM" id="SSF54821">
    <property type="entry name" value="Ribosomal protein S3 C-terminal domain"/>
    <property type="match status" value="1"/>
</dbReference>
<dbReference type="PROSITE" id="PS50823">
    <property type="entry name" value="KH_TYPE_2"/>
    <property type="match status" value="1"/>
</dbReference>
<dbReference type="PROSITE" id="PS00548">
    <property type="entry name" value="RIBOSOMAL_S3"/>
    <property type="match status" value="1"/>
</dbReference>
<keyword id="KW-1185">Reference proteome</keyword>
<keyword id="KW-0687">Ribonucleoprotein</keyword>
<keyword id="KW-0689">Ribosomal protein</keyword>
<keyword id="KW-0694">RNA-binding</keyword>
<keyword id="KW-0699">rRNA-binding</keyword>